<accession>Q8INI8</accession>
<accession>P02824</accession>
<accession>Q95NK0</accession>
<accession>Q95W08</accession>
<accession>Q9BIS1</accession>
<accession>Q9BIS3</accession>
<accession>Q9BIS4</accession>
<accession>Q9I7J6</accession>
<dbReference type="EMBL" id="AF385405">
    <property type="protein sequence ID" value="AAK67154.1"/>
    <property type="molecule type" value="Genomic_DNA"/>
</dbReference>
<dbReference type="EMBL" id="AF385406">
    <property type="protein sequence ID" value="AAK67155.1"/>
    <property type="molecule type" value="Genomic_DNA"/>
</dbReference>
<dbReference type="EMBL" id="AF385407">
    <property type="protein sequence ID" value="AAK67156.1"/>
    <property type="molecule type" value="Genomic_DNA"/>
</dbReference>
<dbReference type="EMBL" id="AF385408">
    <property type="protein sequence ID" value="AAK67157.1"/>
    <property type="molecule type" value="Genomic_DNA"/>
</dbReference>
<dbReference type="EMBL" id="AY032740">
    <property type="protein sequence ID" value="AAK62472.1"/>
    <property type="molecule type" value="Genomic_DNA"/>
</dbReference>
<dbReference type="EMBL" id="AF295946">
    <property type="protein sequence ID" value="AAG26900.1"/>
    <property type="molecule type" value="Genomic_DNA"/>
</dbReference>
<dbReference type="EMBL" id="AF295947">
    <property type="protein sequence ID" value="AAG26901.1"/>
    <property type="molecule type" value="Genomic_DNA"/>
</dbReference>
<dbReference type="EMBL" id="AF295948">
    <property type="protein sequence ID" value="AAG26902.1"/>
    <property type="molecule type" value="Genomic_DNA"/>
</dbReference>
<dbReference type="EMBL" id="AF295949">
    <property type="protein sequence ID" value="AAG26903.1"/>
    <property type="molecule type" value="Genomic_DNA"/>
</dbReference>
<dbReference type="EMBL" id="AF295950">
    <property type="protein sequence ID" value="AAG26904.1"/>
    <property type="molecule type" value="Genomic_DNA"/>
</dbReference>
<dbReference type="EMBL" id="AF350468">
    <property type="protein sequence ID" value="AAK30225.1"/>
    <property type="molecule type" value="Genomic_DNA"/>
</dbReference>
<dbReference type="EMBL" id="AF350469">
    <property type="protein sequence ID" value="AAK30226.1"/>
    <property type="molecule type" value="Genomic_DNA"/>
</dbReference>
<dbReference type="EMBL" id="AF350470">
    <property type="protein sequence ID" value="AAK30227.1"/>
    <property type="molecule type" value="Genomic_DNA"/>
</dbReference>
<dbReference type="EMBL" id="AF350471">
    <property type="protein sequence ID" value="AAK30228.1"/>
    <property type="molecule type" value="Genomic_DNA"/>
</dbReference>
<dbReference type="EMBL" id="AF350472">
    <property type="protein sequence ID" value="AAK30229.1"/>
    <property type="molecule type" value="Genomic_DNA"/>
</dbReference>
<dbReference type="EMBL" id="AF350473">
    <property type="protein sequence ID" value="AAK30230.1"/>
    <property type="molecule type" value="Genomic_DNA"/>
</dbReference>
<dbReference type="EMBL" id="AF350474">
    <property type="protein sequence ID" value="AAK30231.1"/>
    <property type="molecule type" value="Genomic_DNA"/>
</dbReference>
<dbReference type="EMBL" id="AF350475">
    <property type="protein sequence ID" value="AAK30232.1"/>
    <property type="molecule type" value="Genomic_DNA"/>
</dbReference>
<dbReference type="EMBL" id="AE014297">
    <property type="protein sequence ID" value="AAN13545.1"/>
    <property type="molecule type" value="Genomic_DNA"/>
</dbReference>
<dbReference type="RefSeq" id="NP_731716.1">
    <property type="nucleotide sequence ID" value="NM_169469.2"/>
</dbReference>
<dbReference type="SMR" id="Q8INI8"/>
<dbReference type="BioGRID" id="69382">
    <property type="interactions" value="51"/>
</dbReference>
<dbReference type="BioGRID" id="71512">
    <property type="interactions" value="47"/>
</dbReference>
<dbReference type="BioGRID" id="71513">
    <property type="interactions" value="47"/>
</dbReference>
<dbReference type="ELM" id="Q8INI8"/>
<dbReference type="FunCoup" id="Q8INI8">
    <property type="interactions" value="542"/>
</dbReference>
<dbReference type="STRING" id="7227.FBpp0082106"/>
<dbReference type="GlyGen" id="Q8INI8">
    <property type="glycosylation" value="1 site"/>
</dbReference>
<dbReference type="PaxDb" id="7227-FBpp0082106"/>
<dbReference type="DNASU" id="44921"/>
<dbReference type="DNASU" id="48582"/>
<dbReference type="DNASU" id="48583"/>
<dbReference type="EnsemblMetazoa" id="FBtr0082637">
    <property type="protein sequence ID" value="FBpp0082106"/>
    <property type="gene ID" value="FBgn0013278"/>
</dbReference>
<dbReference type="EnsemblMetazoa" id="FBtr0082638">
    <property type="protein sequence ID" value="FBpp0082107"/>
    <property type="gene ID" value="FBgn0013279"/>
</dbReference>
<dbReference type="GeneID" id="44921"/>
<dbReference type="KEGG" id="dme:Dmel_CG31359"/>
<dbReference type="KEGG" id="dme:Dmel_CG31449"/>
<dbReference type="KEGG" id="dme:Dmel_CG6489"/>
<dbReference type="AGR" id="FB:FBgn0013277"/>
<dbReference type="CTD" id="44921"/>
<dbReference type="CTD" id="48582"/>
<dbReference type="CTD" id="48583"/>
<dbReference type="FlyBase" id="FBgn0013277">
    <property type="gene designation" value="Hsp70Ba"/>
</dbReference>
<dbReference type="VEuPathDB" id="VectorBase:FBgn0013278"/>
<dbReference type="VEuPathDB" id="VectorBase:FBgn0013279"/>
<dbReference type="eggNOG" id="KOG0101">
    <property type="taxonomic scope" value="Eukaryota"/>
</dbReference>
<dbReference type="HOGENOM" id="CLU_005965_3_0_1"/>
<dbReference type="InParanoid" id="Q8INI8"/>
<dbReference type="OMA" id="KEECEHR"/>
<dbReference type="OrthoDB" id="7877850at2759"/>
<dbReference type="PhylomeDB" id="Q8INI8"/>
<dbReference type="Reactome" id="R-DME-3371497">
    <property type="pathway name" value="HSP90 chaperone cycle for steroid hormone receptors (SHR) in the presence of ligand"/>
</dbReference>
<dbReference type="SignaLink" id="Q8INI8"/>
<dbReference type="BioGRID-ORCS" id="44921">
    <property type="hits" value="0 hits in 3 CRISPR screens"/>
</dbReference>
<dbReference type="BioGRID-ORCS" id="48582">
    <property type="hits" value="0 hits in 3 CRISPR screens"/>
</dbReference>
<dbReference type="BioGRID-ORCS" id="48583">
    <property type="hits" value="0 hits in 3 CRISPR screens"/>
</dbReference>
<dbReference type="PRO" id="PR:Q8INI8"/>
<dbReference type="Proteomes" id="UP000000803">
    <property type="component" value="Chromosome 3R"/>
</dbReference>
<dbReference type="Bgee" id="FBgn0013278">
    <property type="expression patterns" value="Expressed in adult oenocyte (Drosophila) in adult thorax and 185 other cell types or tissues"/>
</dbReference>
<dbReference type="ExpressionAtlas" id="Q8INI8">
    <property type="expression patterns" value="baseline and differential"/>
</dbReference>
<dbReference type="GO" id="GO:0005737">
    <property type="term" value="C:cytoplasm"/>
    <property type="evidence" value="ECO:0000318"/>
    <property type="project" value="GO_Central"/>
</dbReference>
<dbReference type="GO" id="GO:0005829">
    <property type="term" value="C:cytosol"/>
    <property type="evidence" value="ECO:0000318"/>
    <property type="project" value="GO_Central"/>
</dbReference>
<dbReference type="GO" id="GO:0005634">
    <property type="term" value="C:nucleus"/>
    <property type="evidence" value="ECO:0000318"/>
    <property type="project" value="GO_Central"/>
</dbReference>
<dbReference type="GO" id="GO:0005886">
    <property type="term" value="C:plasma membrane"/>
    <property type="evidence" value="ECO:0000318"/>
    <property type="project" value="GO_Central"/>
</dbReference>
<dbReference type="GO" id="GO:0005524">
    <property type="term" value="F:ATP binding"/>
    <property type="evidence" value="ECO:0007669"/>
    <property type="project" value="UniProtKB-KW"/>
</dbReference>
<dbReference type="GO" id="GO:0016887">
    <property type="term" value="F:ATP hydrolysis activity"/>
    <property type="evidence" value="ECO:0000318"/>
    <property type="project" value="GO_Central"/>
</dbReference>
<dbReference type="GO" id="GO:0140662">
    <property type="term" value="F:ATP-dependent protein folding chaperone"/>
    <property type="evidence" value="ECO:0007669"/>
    <property type="project" value="InterPro"/>
</dbReference>
<dbReference type="GO" id="GO:0031072">
    <property type="term" value="F:heat shock protein binding"/>
    <property type="evidence" value="ECO:0000318"/>
    <property type="project" value="GO_Central"/>
</dbReference>
<dbReference type="GO" id="GO:0044183">
    <property type="term" value="F:protein folding chaperone"/>
    <property type="evidence" value="ECO:0000318"/>
    <property type="project" value="GO_Central"/>
</dbReference>
<dbReference type="GO" id="GO:0051085">
    <property type="term" value="P:chaperone cofactor-dependent protein refolding"/>
    <property type="evidence" value="ECO:0000318"/>
    <property type="project" value="GO_Central"/>
</dbReference>
<dbReference type="GO" id="GO:0035080">
    <property type="term" value="P:heat shock-mediated polytene chromosome puffing"/>
    <property type="evidence" value="ECO:0000315"/>
    <property type="project" value="FlyBase"/>
</dbReference>
<dbReference type="GO" id="GO:0042026">
    <property type="term" value="P:protein refolding"/>
    <property type="evidence" value="ECO:0000318"/>
    <property type="project" value="GO_Central"/>
</dbReference>
<dbReference type="GO" id="GO:0009408">
    <property type="term" value="P:response to heat"/>
    <property type="evidence" value="ECO:0000315"/>
    <property type="project" value="FlyBase"/>
</dbReference>
<dbReference type="GO" id="GO:0001666">
    <property type="term" value="P:response to hypoxia"/>
    <property type="evidence" value="ECO:0000315"/>
    <property type="project" value="FlyBase"/>
</dbReference>
<dbReference type="GO" id="GO:0006986">
    <property type="term" value="P:response to unfolded protein"/>
    <property type="evidence" value="ECO:0000303"/>
    <property type="project" value="UniProtKB"/>
</dbReference>
<dbReference type="CDD" id="cd10233">
    <property type="entry name" value="ASKHA_NBD_HSP70_HSPA1"/>
    <property type="match status" value="1"/>
</dbReference>
<dbReference type="FunFam" id="2.60.34.10:FF:000002">
    <property type="entry name" value="Heat shock 70 kDa"/>
    <property type="match status" value="1"/>
</dbReference>
<dbReference type="FunFam" id="3.90.640.10:FF:000002">
    <property type="entry name" value="Heat shock 70 kDa"/>
    <property type="match status" value="1"/>
</dbReference>
<dbReference type="FunFam" id="3.30.420.40:FF:000172">
    <property type="entry name" value="Heat shock 70 kDa protein"/>
    <property type="match status" value="1"/>
</dbReference>
<dbReference type="FunFam" id="3.30.30.30:FF:000001">
    <property type="entry name" value="heat shock 70 kDa protein-like"/>
    <property type="match status" value="1"/>
</dbReference>
<dbReference type="FunFam" id="1.20.1270.10:FF:000024">
    <property type="entry name" value="Heat shock protein 70"/>
    <property type="match status" value="1"/>
</dbReference>
<dbReference type="FunFam" id="3.30.420.40:FF:000026">
    <property type="entry name" value="Heat shock protein 70"/>
    <property type="match status" value="1"/>
</dbReference>
<dbReference type="Gene3D" id="1.20.1270.10">
    <property type="match status" value="1"/>
</dbReference>
<dbReference type="Gene3D" id="3.30.30.30">
    <property type="match status" value="1"/>
</dbReference>
<dbReference type="Gene3D" id="3.30.420.40">
    <property type="match status" value="2"/>
</dbReference>
<dbReference type="Gene3D" id="3.90.640.10">
    <property type="entry name" value="Actin, Chain A, domain 4"/>
    <property type="match status" value="1"/>
</dbReference>
<dbReference type="Gene3D" id="2.60.34.10">
    <property type="entry name" value="Substrate Binding Domain Of DNAk, Chain A, domain 1"/>
    <property type="match status" value="1"/>
</dbReference>
<dbReference type="InterPro" id="IPR043129">
    <property type="entry name" value="ATPase_NBD"/>
</dbReference>
<dbReference type="InterPro" id="IPR018181">
    <property type="entry name" value="Heat_shock_70_CS"/>
</dbReference>
<dbReference type="InterPro" id="IPR029048">
    <property type="entry name" value="HSP70_C_sf"/>
</dbReference>
<dbReference type="InterPro" id="IPR029047">
    <property type="entry name" value="HSP70_peptide-bd_sf"/>
</dbReference>
<dbReference type="InterPro" id="IPR013126">
    <property type="entry name" value="Hsp_70_fam"/>
</dbReference>
<dbReference type="NCBIfam" id="NF001413">
    <property type="entry name" value="PRK00290.1"/>
    <property type="match status" value="1"/>
</dbReference>
<dbReference type="PANTHER" id="PTHR19375">
    <property type="entry name" value="HEAT SHOCK PROTEIN 70KDA"/>
    <property type="match status" value="1"/>
</dbReference>
<dbReference type="Pfam" id="PF00012">
    <property type="entry name" value="HSP70"/>
    <property type="match status" value="1"/>
</dbReference>
<dbReference type="PRINTS" id="PR00301">
    <property type="entry name" value="HEATSHOCK70"/>
</dbReference>
<dbReference type="SUPFAM" id="SSF53067">
    <property type="entry name" value="Actin-like ATPase domain"/>
    <property type="match status" value="2"/>
</dbReference>
<dbReference type="SUPFAM" id="SSF100934">
    <property type="entry name" value="Heat shock protein 70kD (HSP70), C-terminal subdomain"/>
    <property type="match status" value="1"/>
</dbReference>
<dbReference type="SUPFAM" id="SSF100920">
    <property type="entry name" value="Heat shock protein 70kD (HSP70), peptide-binding domain"/>
    <property type="match status" value="1"/>
</dbReference>
<dbReference type="PROSITE" id="PS00297">
    <property type="entry name" value="HSP70_1"/>
    <property type="match status" value="1"/>
</dbReference>
<dbReference type="PROSITE" id="PS00329">
    <property type="entry name" value="HSP70_2"/>
    <property type="match status" value="1"/>
</dbReference>
<dbReference type="PROSITE" id="PS01036">
    <property type="entry name" value="HSP70_3"/>
    <property type="match status" value="1"/>
</dbReference>
<name>HSP72_DROME</name>
<gene>
    <name type="primary">Hsp70Ba</name>
    <name type="ORF">CG31449</name>
</gene>
<organism>
    <name type="scientific">Drosophila melanogaster</name>
    <name type="common">Fruit fly</name>
    <dbReference type="NCBI Taxonomy" id="7227"/>
    <lineage>
        <taxon>Eukaryota</taxon>
        <taxon>Metazoa</taxon>
        <taxon>Ecdysozoa</taxon>
        <taxon>Arthropoda</taxon>
        <taxon>Hexapoda</taxon>
        <taxon>Insecta</taxon>
        <taxon>Pterygota</taxon>
        <taxon>Neoptera</taxon>
        <taxon>Endopterygota</taxon>
        <taxon>Diptera</taxon>
        <taxon>Brachycera</taxon>
        <taxon>Muscomorpha</taxon>
        <taxon>Ephydroidea</taxon>
        <taxon>Drosophilidae</taxon>
        <taxon>Drosophila</taxon>
        <taxon>Sophophora</taxon>
    </lineage>
</organism>
<keyword id="KW-0067">ATP-binding</keyword>
<keyword id="KW-0547">Nucleotide-binding</keyword>
<keyword id="KW-1185">Reference proteome</keyword>
<keyword id="KW-0346">Stress response</keyword>
<comment type="function">
    <text evidence="3">Stress-response chaperone protein that prevents toxic aggregation of proteins.</text>
</comment>
<comment type="subunit">
    <text evidence="2">Forms a complex with Hsp83/Hsp90 and Dpit47.</text>
</comment>
<comment type="induction">
    <text evidence="3">Heat shock induces the synthesis of seven proteins at five otherwise inactive sites in the polytene chromosomes of fruit fly larvae. Two separate sites, producing two and three copies, respectively, code for the 70 kDa protein. Expression is induced by proteotoxic stress caused by toxic protein aggregation, for example by overexpressed Atx-1/ataxin-1 (PubMed:18344983).</text>
</comment>
<comment type="miscellaneous">
    <text evidence="4">There are 5 or 6 copies of the gene encoding this protein at two separate loci, 2 copies at chromosome locus 87A7 in reverse orientation (Hsp70Aa and Hsp70Ab) at locus 87A7, and 3 or 4 copies (depending on strain) at locus 87C1. Most strains have three copies at chromosome locus 87C1; two tandemly repeated Hsp70 genes (Hsp70Bb and Hsp70Bc) and one in reverse orientation (Hsp70Ba). Some strains, including that sequenced in the Drosophila genome project have an additional copy making three tandemly repeated Hsp70 genes (Hsp70Bb, Hsp70Bbb and Hsp70Bc).</text>
</comment>
<comment type="similarity">
    <text evidence="4">Belongs to the heat shock protein 70 family.</text>
</comment>
<sequence length="641" mass="70195">MPAIGIDLGTTYSCVGVYQHGKVEIIANDQGNRTTPSYVAFTDSERLIGDPAKNQVAMNPRNTVFDAKRLIGRKYDDPKIAEDMKHWPFKVVSDGGKPKIGVEYKGESKRFAPEEISSMVLTKMKETAEAYLGESITDAVITVPAYFNDSQRQATKDAGHIAGLNVLRIINEPTAAALAYGLDKNLKGERNVLIFDLGGGTFDVSILTIDEGSLFEVRSTAGDTHLGGEDFDNRLVTHLAEEFKRKYKKDLRSNPRALRRLRTAAERAKRTLSSSTEATIEIDALFEGQDFYTKVSRARFEELCADLFRNTLQPVEKALNDAKMDKGQIHDIVLVGGSTRIPKVQSLLQEFFHGKNLNLSINPDEAVAYGAAVQAAILSGDQSGKIQDVLLVDVAPLSLGIETAGGVMTKLIERNCRIPCKQTKTFSTYSDNQPGVSIQVYEGERAMTKDNNALGTFDLSGIPPAPRGVPQIEVTFDLDANGILNVSAKEMSTGKAKNITIKNDKGRLSQAEIDRMVNEAEKYADEDEKHRQRITSRNALESYVFNVKQSVEQAPAGKLDEADKNSVLDKCNETIRWLDSNTTAEKEEFDHKMEELTRHCSPIMTKMHQQGAGAAGGPGANCGQQAGGFGGYSGPTVEEVD</sequence>
<proteinExistence type="evidence at protein level"/>
<protein>
    <recommendedName>
        <fullName>Major heat shock 70 kDa protein Ba</fullName>
        <shortName>Heat shock protein 70Ba</shortName>
    </recommendedName>
    <alternativeName>
        <fullName>HSP70-87C1</fullName>
    </alternativeName>
</protein>
<reference key="1">
    <citation type="journal article" date="2001" name="Proc. Natl. Acad. Sci. U.S.A.">
        <title>Genetic evidence for adaptation-driven incipient speciation of Drosophila melanogaster along a microclimatic contrast in 'Evolution Canyon,' Israel.</title>
        <authorList>
            <person name="Michalak P."/>
            <person name="Minkov I."/>
            <person name="Helin A."/>
            <person name="Lerman D.N."/>
            <person name="Bettencourt B.R."/>
            <person name="Feder M.E."/>
            <person name="Korol A.B."/>
            <person name="Nevo E."/>
        </authorList>
    </citation>
    <scope>NUCLEOTIDE SEQUENCE [GENOMIC DNA]</scope>
    <source>
        <strain>NFS97</strain>
        <strain>SFS97</strain>
    </source>
</reference>
<reference key="2">
    <citation type="journal article" date="2001" name="J. Exp. Biol.">
        <title>A Drosophila melanogaster strain from sub-equatorial Africa has exceptional thermotolerance but decreased Hsp70 expression.</title>
        <authorList>
            <person name="Zatsepina O.G."/>
            <person name="Velikodvorskaia V.V."/>
            <person name="Molodtsov V.B."/>
            <person name="Garbuz D."/>
            <person name="Lerman D.N."/>
            <person name="Bettencourt B.R."/>
            <person name="Feder M.E."/>
            <person name="Evgenev M.B."/>
        </authorList>
    </citation>
    <scope>NUCLEOTIDE SEQUENCE [GENOMIC DNA]</scope>
    <source>
        <strain>T32</strain>
    </source>
</reference>
<reference key="3">
    <citation type="journal article" date="2002" name="J. Mol. Evol.">
        <title>Rapid concerted evolution via gene conversion at the Drosophila hsp70 genes.</title>
        <authorList>
            <person name="Bettencourt B.R."/>
            <person name="Feder M.E."/>
        </authorList>
    </citation>
    <scope>NUCLEOTIDE SEQUENCE [GENOMIC DNA]</scope>
    <source>
        <strain>3CPA126</strain>
        <strain>3CPA2</strain>
        <strain>3CPA35</strain>
        <strain>3CPA43</strain>
        <strain>3CPA47</strain>
        <strain>3CPA61</strain>
        <strain>3CPA81</strain>
        <strain>3CPA86</strain>
        <strain>A28</strain>
        <strain>AUS</strain>
        <strain>FrV3-1</strain>
        <strain>QD18</strain>
        <strain>Z(H)1</strain>
    </source>
</reference>
<reference key="4">
    <citation type="journal article" date="2000" name="Science">
        <title>The genome sequence of Drosophila melanogaster.</title>
        <authorList>
            <person name="Adams M.D."/>
            <person name="Celniker S.E."/>
            <person name="Holt R.A."/>
            <person name="Evans C.A."/>
            <person name="Gocayne J.D."/>
            <person name="Amanatides P.G."/>
            <person name="Scherer S.E."/>
            <person name="Li P.W."/>
            <person name="Hoskins R.A."/>
            <person name="Galle R.F."/>
            <person name="George R.A."/>
            <person name="Lewis S.E."/>
            <person name="Richards S."/>
            <person name="Ashburner M."/>
            <person name="Henderson S.N."/>
            <person name="Sutton G.G."/>
            <person name="Wortman J.R."/>
            <person name="Yandell M.D."/>
            <person name="Zhang Q."/>
            <person name="Chen L.X."/>
            <person name="Brandon R.C."/>
            <person name="Rogers Y.-H.C."/>
            <person name="Blazej R.G."/>
            <person name="Champe M."/>
            <person name="Pfeiffer B.D."/>
            <person name="Wan K.H."/>
            <person name="Doyle C."/>
            <person name="Baxter E.G."/>
            <person name="Helt G."/>
            <person name="Nelson C.R."/>
            <person name="Miklos G.L.G."/>
            <person name="Abril J.F."/>
            <person name="Agbayani A."/>
            <person name="An H.-J."/>
            <person name="Andrews-Pfannkoch C."/>
            <person name="Baldwin D."/>
            <person name="Ballew R.M."/>
            <person name="Basu A."/>
            <person name="Baxendale J."/>
            <person name="Bayraktaroglu L."/>
            <person name="Beasley E.M."/>
            <person name="Beeson K.Y."/>
            <person name="Benos P.V."/>
            <person name="Berman B.P."/>
            <person name="Bhandari D."/>
            <person name="Bolshakov S."/>
            <person name="Borkova D."/>
            <person name="Botchan M.R."/>
            <person name="Bouck J."/>
            <person name="Brokstein P."/>
            <person name="Brottier P."/>
            <person name="Burtis K.C."/>
            <person name="Busam D.A."/>
            <person name="Butler H."/>
            <person name="Cadieu E."/>
            <person name="Center A."/>
            <person name="Chandra I."/>
            <person name="Cherry J.M."/>
            <person name="Cawley S."/>
            <person name="Dahlke C."/>
            <person name="Davenport L.B."/>
            <person name="Davies P."/>
            <person name="de Pablos B."/>
            <person name="Delcher A."/>
            <person name="Deng Z."/>
            <person name="Mays A.D."/>
            <person name="Dew I."/>
            <person name="Dietz S.M."/>
            <person name="Dodson K."/>
            <person name="Doup L.E."/>
            <person name="Downes M."/>
            <person name="Dugan-Rocha S."/>
            <person name="Dunkov B.C."/>
            <person name="Dunn P."/>
            <person name="Durbin K.J."/>
            <person name="Evangelista C.C."/>
            <person name="Ferraz C."/>
            <person name="Ferriera S."/>
            <person name="Fleischmann W."/>
            <person name="Fosler C."/>
            <person name="Gabrielian A.E."/>
            <person name="Garg N.S."/>
            <person name="Gelbart W.M."/>
            <person name="Glasser K."/>
            <person name="Glodek A."/>
            <person name="Gong F."/>
            <person name="Gorrell J.H."/>
            <person name="Gu Z."/>
            <person name="Guan P."/>
            <person name="Harris M."/>
            <person name="Harris N.L."/>
            <person name="Harvey D.A."/>
            <person name="Heiman T.J."/>
            <person name="Hernandez J.R."/>
            <person name="Houck J."/>
            <person name="Hostin D."/>
            <person name="Houston K.A."/>
            <person name="Howland T.J."/>
            <person name="Wei M.-H."/>
            <person name="Ibegwam C."/>
            <person name="Jalali M."/>
            <person name="Kalush F."/>
            <person name="Karpen G.H."/>
            <person name="Ke Z."/>
            <person name="Kennison J.A."/>
            <person name="Ketchum K.A."/>
            <person name="Kimmel B.E."/>
            <person name="Kodira C.D."/>
            <person name="Kraft C.L."/>
            <person name="Kravitz S."/>
            <person name="Kulp D."/>
            <person name="Lai Z."/>
            <person name="Lasko P."/>
            <person name="Lei Y."/>
            <person name="Levitsky A.A."/>
            <person name="Li J.H."/>
            <person name="Li Z."/>
            <person name="Liang Y."/>
            <person name="Lin X."/>
            <person name="Liu X."/>
            <person name="Mattei B."/>
            <person name="McIntosh T.C."/>
            <person name="McLeod M.P."/>
            <person name="McPherson D."/>
            <person name="Merkulov G."/>
            <person name="Milshina N.V."/>
            <person name="Mobarry C."/>
            <person name="Morris J."/>
            <person name="Moshrefi A."/>
            <person name="Mount S.M."/>
            <person name="Moy M."/>
            <person name="Murphy B."/>
            <person name="Murphy L."/>
            <person name="Muzny D.M."/>
            <person name="Nelson D.L."/>
            <person name="Nelson D.R."/>
            <person name="Nelson K.A."/>
            <person name="Nixon K."/>
            <person name="Nusskern D.R."/>
            <person name="Pacleb J.M."/>
            <person name="Palazzolo M."/>
            <person name="Pittman G.S."/>
            <person name="Pan S."/>
            <person name="Pollard J."/>
            <person name="Puri V."/>
            <person name="Reese M.G."/>
            <person name="Reinert K."/>
            <person name="Remington K."/>
            <person name="Saunders R.D.C."/>
            <person name="Scheeler F."/>
            <person name="Shen H."/>
            <person name="Shue B.C."/>
            <person name="Siden-Kiamos I."/>
            <person name="Simpson M."/>
            <person name="Skupski M.P."/>
            <person name="Smith T.J."/>
            <person name="Spier E."/>
            <person name="Spradling A.C."/>
            <person name="Stapleton M."/>
            <person name="Strong R."/>
            <person name="Sun E."/>
            <person name="Svirskas R."/>
            <person name="Tector C."/>
            <person name="Turner R."/>
            <person name="Venter E."/>
            <person name="Wang A.H."/>
            <person name="Wang X."/>
            <person name="Wang Z.-Y."/>
            <person name="Wassarman D.A."/>
            <person name="Weinstock G.M."/>
            <person name="Weissenbach J."/>
            <person name="Williams S.M."/>
            <person name="Woodage T."/>
            <person name="Worley K.C."/>
            <person name="Wu D."/>
            <person name="Yang S."/>
            <person name="Yao Q.A."/>
            <person name="Ye J."/>
            <person name="Yeh R.-F."/>
            <person name="Zaveri J.S."/>
            <person name="Zhan M."/>
            <person name="Zhang G."/>
            <person name="Zhao Q."/>
            <person name="Zheng L."/>
            <person name="Zheng X.H."/>
            <person name="Zhong F.N."/>
            <person name="Zhong W."/>
            <person name="Zhou X."/>
            <person name="Zhu S.C."/>
            <person name="Zhu X."/>
            <person name="Smith H.O."/>
            <person name="Gibbs R.A."/>
            <person name="Myers E.W."/>
            <person name="Rubin G.M."/>
            <person name="Venter J.C."/>
        </authorList>
    </citation>
    <scope>NUCLEOTIDE SEQUENCE [LARGE SCALE GENOMIC DNA]</scope>
    <source>
        <strain>Berkeley</strain>
    </source>
</reference>
<reference key="5">
    <citation type="journal article" date="2002" name="Genome Biol.">
        <title>Annotation of the Drosophila melanogaster euchromatic genome: a systematic review.</title>
        <authorList>
            <person name="Misra S."/>
            <person name="Crosby M.A."/>
            <person name="Mungall C.J."/>
            <person name="Matthews B.B."/>
            <person name="Campbell K.S."/>
            <person name="Hradecky P."/>
            <person name="Huang Y."/>
            <person name="Kaminker J.S."/>
            <person name="Millburn G.H."/>
            <person name="Prochnik S.E."/>
            <person name="Smith C.D."/>
            <person name="Tupy J.L."/>
            <person name="Whitfield E.J."/>
            <person name="Bayraktaroglu L."/>
            <person name="Berman B.P."/>
            <person name="Bettencourt B.R."/>
            <person name="Celniker S.E."/>
            <person name="de Grey A.D.N.J."/>
            <person name="Drysdale R.A."/>
            <person name="Harris N.L."/>
            <person name="Richter J."/>
            <person name="Russo S."/>
            <person name="Schroeder A.J."/>
            <person name="Shu S.Q."/>
            <person name="Stapleton M."/>
            <person name="Yamada C."/>
            <person name="Ashburner M."/>
            <person name="Gelbart W.M."/>
            <person name="Rubin G.M."/>
            <person name="Lewis S.E."/>
        </authorList>
    </citation>
    <scope>GENOME REANNOTATION</scope>
    <source>
        <strain>Berkeley</strain>
    </source>
</reference>
<reference key="6">
    <citation type="journal article" date="2001" name="J. Cell Sci.">
        <title>The Drosophila Dpit47 protein is a nuclear Hsp90 co-chaperone that interacts with DNA polymerase alpha.</title>
        <authorList>
            <person name="Crevel G."/>
            <person name="Bates H."/>
            <person name="Huikeshoven H."/>
            <person name="Cotterill S."/>
        </authorList>
    </citation>
    <scope>INTERACTION WITH DPIT47 AND HSP83</scope>
</reference>
<reference key="7">
    <citation type="journal article" date="2008" name="Nature">
        <title>NAD synthase NMNAT acts as a chaperone to protect against neurodegeneration.</title>
        <authorList>
            <person name="Zhai R.G."/>
            <person name="Zhang F."/>
            <person name="Hiesinger P.R."/>
            <person name="Cao Y."/>
            <person name="Haueter C.M."/>
            <person name="Bellen H.J."/>
        </authorList>
    </citation>
    <scope>FUNCTION</scope>
    <scope>INDUCTION BY PROTEOTOXIC STRESS</scope>
</reference>
<feature type="chain" id="PRO_0000078332" description="Major heat shock 70 kDa protein Ba">
    <location>
        <begin position="1"/>
        <end position="641"/>
    </location>
</feature>
<feature type="region of interest" description="Disordered" evidence="1">
    <location>
        <begin position="609"/>
        <end position="641"/>
    </location>
</feature>
<feature type="compositionally biased region" description="Gly residues" evidence="1">
    <location>
        <begin position="613"/>
        <end position="633"/>
    </location>
</feature>
<feature type="sequence variant" description="In strain: NFS97.">
    <original>P</original>
    <variation>H</variation>
    <location>
        <position position="2"/>
    </location>
</feature>
<feature type="sequence variant" description="In strain: 3CPA86 and T32.">
    <original>D</original>
    <variation>E</variation>
    <location>
        <position position="43"/>
    </location>
</feature>
<feature type="sequence variant" description="In strain: 3CPA86 and 3CPA126.">
    <original>E</original>
    <variation>D</variation>
    <location>
        <position position="129"/>
    </location>
</feature>
<feature type="sequence variant" description="In strain: 3CPA86 and 3CPA126.">
    <original>D</original>
    <variation>E</variation>
    <location>
        <position position="138"/>
    </location>
</feature>
<feature type="sequence variant" description="In strain: QD18.">
    <original>F</original>
    <variation>L</variation>
    <location>
        <position position="195"/>
    </location>
</feature>
<feature type="sequence variant" description="In strain: Z(H)1.">
    <original>E</original>
    <variation>D</variation>
    <location>
        <position position="241"/>
    </location>
</feature>
<feature type="sequence variant" description="In strain: Z(H)1.">
    <original>E</original>
    <variation>D</variation>
    <location>
        <position position="350"/>
    </location>
</feature>
<feature type="sequence variant" description="In strain: Z(H)1.">
    <original>S</original>
    <variation>A</variation>
    <location>
        <position position="430"/>
    </location>
</feature>
<feature type="sequence variant" description="In strain: A28.">
    <original>M</original>
    <variation>I</variation>
    <location>
        <position position="516"/>
    </location>
</feature>
<feature type="sequence variant" description="In strain: A28.">
    <original>A</original>
    <variation>V</variation>
    <location>
        <position position="524"/>
    </location>
</feature>
<feature type="sequence variant" description="In strain: AUS and Berkeley.">
    <original>F</original>
    <variation>Y</variation>
    <location>
        <position position="545"/>
    </location>
</feature>
<feature type="sequence variant" description="In strain: AUS.">
    <original>P</original>
    <variation>T</variation>
    <location>
        <position position="555"/>
    </location>
</feature>
<feature type="sequence variant" description="In strain: A28.">
    <original>E</original>
    <variation>D</variation>
    <location>
        <position position="573"/>
    </location>
</feature>
<feature type="sequence variant" description="In strain: 3CPA126 and QD18.">
    <original>K</original>
    <variation>T</variation>
    <location>
        <position position="606"/>
    </location>
</feature>
<feature type="sequence conflict" description="In Ref. 2; AAK67154." evidence="4" ref="2">
    <original>D</original>
    <variation>E</variation>
    <location>
        <position position="196"/>
    </location>
</feature>
<feature type="sequence conflict" description="In Ref. 2; AAK67154." evidence="4" ref="2">
    <original>V</original>
    <variation>L</variation>
    <location>
        <position position="333"/>
    </location>
</feature>
<feature type="sequence conflict" description="In Ref. 4; AAN13545." evidence="4" ref="4">
    <original>T</original>
    <variation>A</variation>
    <location>
        <position position="597"/>
    </location>
</feature>
<evidence type="ECO:0000256" key="1">
    <source>
        <dbReference type="SAM" id="MobiDB-lite"/>
    </source>
</evidence>
<evidence type="ECO:0000269" key="2">
    <source>
    </source>
</evidence>
<evidence type="ECO:0000269" key="3">
    <source>
    </source>
</evidence>
<evidence type="ECO:0000305" key="4"/>